<sequence>MFVIKRNGYKENVMFDKITSRIRKLCYGLNTDHIDPIKIAMKVIQGIYNGVTTVELDTLTAEIAATCTTQHPDYAILAARIAVSNLHKETKKLFSEVMKDLFNYVNPKNGKHSPIISSITMDVVNKYKDKLNSVIIYERDFSYNYFGFKTLEKSYLLKINNKIVERPQHMLMRVAVGIHQWDIDSAIETYNLLSEKWFTHASPTLFNAGTSRHQMSSCFLLNMMDDSIEGIYDTLKRCALISKMAGGIGLSISNIRASGSYISGTNGASNGIIPMLRVYNNTARYIDQGGNKRPGVMTIYLEPWHSDIMAFLDLKKNTGNEEHRTRDLFIALWIPDLFMKRVKDDGEWSLMCPDECPGLDNVWGDEFERLYTLYEREKRYKSIIKARVVWKAIIESQIETGTPFILYKDACNKKSNQQNLGTIKCSNLCTEIIQYADANEVAVCNLASIALNMFVIDGQFDFLKLKDVVKVIVRNLNKIIDINYYPIPEAEISNKRHRPIGIGVQGLADAFILLNYPFDSLEAQDLNKKIFETIYYGALEASCELAEKEGPYDTYVGSYASNGILQYDLWNVVPSDLWNWEPLKDKIRTYGLRNSLLVAPMPTASTAQILGNNESVEPYTSNIYTRRVLSGEFQVVNPHLLRVLTERKLWNDEIKNRIMVDGGSIQNTNLPEDIKRVYKTIWEIPQKTIIKMAADRGAFIDQSQSMNIHIADPSYSKLTSMHFYGWSLGLKTGMYYLRTKPASAPIQFTLDKDKIKPLVVCDSEICTSCSG</sequence>
<comment type="function">
    <text evidence="2">Ribonucleoside-diphosphate reductase holoenzyme provides the precursors necessary for viral DNA synthesis. Allows virus growth in non-dividing cells. Catalyzes the biosynthesis of deoxyribonucleotides from the corresponding ribonucleotides.</text>
</comment>
<comment type="catalytic activity">
    <reaction evidence="2">
        <text>a 2'-deoxyribonucleoside 5'-diphosphate + [thioredoxin]-disulfide + H2O = a ribonucleoside 5'-diphosphate + [thioredoxin]-dithiol</text>
        <dbReference type="Rhea" id="RHEA:23252"/>
        <dbReference type="Rhea" id="RHEA-COMP:10698"/>
        <dbReference type="Rhea" id="RHEA-COMP:10700"/>
        <dbReference type="ChEBI" id="CHEBI:15377"/>
        <dbReference type="ChEBI" id="CHEBI:29950"/>
        <dbReference type="ChEBI" id="CHEBI:50058"/>
        <dbReference type="ChEBI" id="CHEBI:57930"/>
        <dbReference type="ChEBI" id="CHEBI:73316"/>
        <dbReference type="EC" id="1.17.4.1"/>
    </reaction>
    <physiologicalReaction direction="right-to-left" evidence="2">
        <dbReference type="Rhea" id="RHEA:23254"/>
    </physiologicalReaction>
</comment>
<comment type="cofactor">
    <cofactor evidence="2">
        <name>Mg(2+)</name>
        <dbReference type="ChEBI" id="CHEBI:18420"/>
    </cofactor>
    <text evidence="2">Maximal ribonucleotide reductase activity requires the presence of Mg(2+) ions.</text>
</comment>
<comment type="subunit">
    <text evidence="2">Interacts with RNR2/OPG047 subunit.</text>
</comment>
<comment type="induction">
    <text>Expressed early in the viral replicative cycle.</text>
</comment>
<comment type="similarity">
    <text evidence="6">Belongs to the ribonucleoside diphosphate reductase large chain family.</text>
</comment>
<organism>
    <name type="scientific">Variola virus</name>
    <dbReference type="NCBI Taxonomy" id="10255"/>
    <lineage>
        <taxon>Viruses</taxon>
        <taxon>Varidnaviria</taxon>
        <taxon>Bamfordvirae</taxon>
        <taxon>Nucleocytoviricota</taxon>
        <taxon>Pokkesviricetes</taxon>
        <taxon>Chitovirales</taxon>
        <taxon>Poxviridae</taxon>
        <taxon>Chordopoxvirinae</taxon>
        <taxon>Orthopoxvirus</taxon>
    </lineage>
</organism>
<evidence type="ECO:0000250" key="1">
    <source>
        <dbReference type="UniProtKB" id="P00452"/>
    </source>
</evidence>
<evidence type="ECO:0000250" key="2">
    <source>
        <dbReference type="UniProtKB" id="P12848"/>
    </source>
</evidence>
<evidence type="ECO:0000250" key="3">
    <source>
        <dbReference type="UniProtKB" id="P21524"/>
    </source>
</evidence>
<evidence type="ECO:0000250" key="4">
    <source>
        <dbReference type="UniProtKB" id="P23921"/>
    </source>
</evidence>
<evidence type="ECO:0000255" key="5">
    <source>
        <dbReference type="PROSITE-ProRule" id="PRU00492"/>
    </source>
</evidence>
<evidence type="ECO:0000305" key="6"/>
<protein>
    <recommendedName>
        <fullName>Ribonucleoside-diphosphate reductase large subunit</fullName>
        <ecNumber>1.17.4.1</ecNumber>
    </recommendedName>
    <alternativeName>
        <fullName>Ribonucleotide reductase large subunit</fullName>
    </alternativeName>
    <alternativeName>
        <fullName>Ribonucleotide reductase subunit 1</fullName>
        <shortName>RNR1</shortName>
    </alternativeName>
</protein>
<reference key="1">
    <citation type="journal article" date="1993" name="Nature">
        <title>Potential virulence determinants in terminal regions of variola smallpox virus genome.</title>
        <authorList>
            <person name="Massung R.F."/>
            <person name="Esposito J.J."/>
            <person name="Liu L.I."/>
            <person name="Qi J."/>
            <person name="Utterback T.R."/>
            <person name="Knight J.C."/>
            <person name="Aubin L."/>
            <person name="Yuran T.E."/>
            <person name="Parsons J.M."/>
            <person name="Loparev V.N."/>
            <person name="Selivanov N.A."/>
            <person name="Cavallaro K.F."/>
            <person name="Kerlavage A.R."/>
            <person name="Mahy B.W.J."/>
            <person name="Venter J.C."/>
        </authorList>
    </citation>
    <scope>NUCLEOTIDE SEQUENCE [GENOMIC DNA]</scope>
    <source>
        <strain>Bangladesh-1975</strain>
    </source>
</reference>
<reference key="2">
    <citation type="submission" date="1995-12" db="EMBL/GenBank/DDBJ databases">
        <authorList>
            <person name="Shchelkunov S.N."/>
            <person name="Chizhikov V.E."/>
            <person name="Totmenin A.V."/>
            <person name="Resenchuk S.M."/>
            <person name="Blinov V.M."/>
            <person name="Sandakhchiev L.S."/>
        </authorList>
    </citation>
    <scope>NUCLEOTIDE SEQUENCE [GENOMIC DNA]</scope>
    <source>
        <strain>Garcia-1966</strain>
    </source>
</reference>
<feature type="chain" id="PRO_0000448119" description="Ribonucleoside-diphosphate reductase large subunit">
    <location>
        <begin position="1"/>
        <end position="771"/>
    </location>
</feature>
<feature type="domain" description="ATP-cone" evidence="5">
    <location>
        <begin position="1"/>
        <end position="92"/>
    </location>
</feature>
<feature type="active site" description="Proton acceptor" evidence="3">
    <location>
        <position position="427"/>
    </location>
</feature>
<feature type="active site" description="Cysteine radical intermediate" evidence="3">
    <location>
        <position position="429"/>
    </location>
</feature>
<feature type="active site" description="Proton acceptor" evidence="3">
    <location>
        <position position="431"/>
    </location>
</feature>
<feature type="binding site" evidence="4">
    <location>
        <begin position="5"/>
        <end position="6"/>
    </location>
    <ligand>
        <name>ATP</name>
        <dbReference type="ChEBI" id="CHEBI:30616"/>
        <note>allosteric activator</note>
    </ligand>
</feature>
<feature type="binding site" evidence="4">
    <location>
        <begin position="11"/>
        <end position="17"/>
    </location>
    <ligand>
        <name>ATP</name>
        <dbReference type="ChEBI" id="CHEBI:30616"/>
        <note>allosteric activator</note>
    </ligand>
</feature>
<feature type="binding site" evidence="4">
    <location>
        <position position="53"/>
    </location>
    <ligand>
        <name>ATP</name>
        <dbReference type="ChEBI" id="CHEBI:30616"/>
        <note>allosteric activator</note>
    </ligand>
</feature>
<feature type="binding site" evidence="4">
    <location>
        <position position="57"/>
    </location>
    <ligand>
        <name>ATP</name>
        <dbReference type="ChEBI" id="CHEBI:30616"/>
        <note>allosteric activator</note>
    </ligand>
</feature>
<feature type="binding site" evidence="1">
    <location>
        <position position="88"/>
    </location>
    <ligand>
        <name>ATP</name>
        <dbReference type="ChEBI" id="CHEBI:30616"/>
        <note>allosteric activator</note>
    </ligand>
</feature>
<feature type="binding site" evidence="4">
    <location>
        <position position="202"/>
    </location>
    <ligand>
        <name>GDP</name>
        <dbReference type="ChEBI" id="CHEBI:58189"/>
    </ligand>
</feature>
<feature type="binding site" evidence="4">
    <location>
        <position position="217"/>
    </location>
    <ligand>
        <name>GDP</name>
        <dbReference type="ChEBI" id="CHEBI:58189"/>
    </ligand>
</feature>
<feature type="binding site" evidence="4">
    <location>
        <begin position="226"/>
        <end position="228"/>
    </location>
    <ligand>
        <name>dTTP</name>
        <dbReference type="ChEBI" id="CHEBI:37568"/>
        <note>allosteric effector that controls substrate specificity</note>
    </ligand>
</feature>
<feature type="binding site" evidence="4">
    <location>
        <position position="243"/>
    </location>
    <ligand>
        <name>dTTP</name>
        <dbReference type="ChEBI" id="CHEBI:37568"/>
        <note>allosteric effector that controls substrate specificity</note>
    </ligand>
</feature>
<feature type="binding site" evidence="4">
    <location>
        <position position="256"/>
    </location>
    <ligand>
        <name>dTTP</name>
        <dbReference type="ChEBI" id="CHEBI:37568"/>
        <note>allosteric effector that controls substrate specificity</note>
    </ligand>
</feature>
<feature type="binding site" evidence="4">
    <location>
        <position position="427"/>
    </location>
    <ligand>
        <name>GDP</name>
        <dbReference type="ChEBI" id="CHEBI:58189"/>
    </ligand>
</feature>
<feature type="binding site" evidence="4">
    <location>
        <position position="431"/>
    </location>
    <ligand>
        <name>GDP</name>
        <dbReference type="ChEBI" id="CHEBI:58189"/>
    </ligand>
</feature>
<feature type="binding site" evidence="4">
    <location>
        <begin position="603"/>
        <end position="606"/>
    </location>
    <ligand>
        <name>GDP</name>
        <dbReference type="ChEBI" id="CHEBI:58189"/>
    </ligand>
</feature>
<feature type="sequence variant" description="In strain: Garcia-1966.">
    <original>D</original>
    <variation>Y</variation>
    <location>
        <position position="509"/>
    </location>
</feature>
<feature type="sequence variant" description="In strain: Garcia-1966.">
    <original>E</original>
    <variation>K</variation>
    <location>
        <position position="764"/>
    </location>
</feature>
<keyword id="KW-0021">Allosteric enzyme</keyword>
<keyword id="KW-0067">ATP-binding</keyword>
<keyword id="KW-0215">Deoxyribonucleotide synthesis</keyword>
<keyword id="KW-0244">Early protein</keyword>
<keyword id="KW-0460">Magnesium</keyword>
<keyword id="KW-0547">Nucleotide-binding</keyword>
<keyword id="KW-0560">Oxidoreductase</keyword>
<proteinExistence type="evidence at transcript level"/>
<gene>
    <name type="primary">OPG080</name>
    <name type="ORF">I4L</name>
    <name type="ORF">K4L</name>
    <name type="ORF">ORF3L</name>
</gene>
<dbReference type="EC" id="1.17.4.1"/>
<dbReference type="EMBL" id="L22579">
    <property type="protein sequence ID" value="AAA60806.1"/>
    <property type="molecule type" value="Genomic_DNA"/>
</dbReference>
<dbReference type="EMBL" id="X76263">
    <property type="protein sequence ID" value="CAA53832.1"/>
    <property type="molecule type" value="Genomic_DNA"/>
</dbReference>
<dbReference type="PIR" id="T28496">
    <property type="entry name" value="T28496"/>
</dbReference>
<dbReference type="RefSeq" id="NP_042102.1">
    <property type="nucleotide sequence ID" value="NC_001611.1"/>
</dbReference>
<dbReference type="SMR" id="P0DSV2"/>
<dbReference type="GeneID" id="1486459"/>
<dbReference type="KEGG" id="vg:1486459"/>
<dbReference type="Proteomes" id="UP000119805">
    <property type="component" value="Segment"/>
</dbReference>
<dbReference type="GO" id="GO:0005524">
    <property type="term" value="F:ATP binding"/>
    <property type="evidence" value="ECO:0007669"/>
    <property type="project" value="UniProtKB-KW"/>
</dbReference>
<dbReference type="GO" id="GO:0004748">
    <property type="term" value="F:ribonucleoside-diphosphate reductase activity, thioredoxin disulfide as acceptor"/>
    <property type="evidence" value="ECO:0007669"/>
    <property type="project" value="UniProtKB-EC"/>
</dbReference>
<dbReference type="GO" id="GO:0009263">
    <property type="term" value="P:deoxyribonucleotide biosynthetic process"/>
    <property type="evidence" value="ECO:0007669"/>
    <property type="project" value="UniProtKB-KW"/>
</dbReference>
<dbReference type="CDD" id="cd01679">
    <property type="entry name" value="RNR_I"/>
    <property type="match status" value="1"/>
</dbReference>
<dbReference type="FunFam" id="3.20.70.20:FF:000010">
    <property type="entry name" value="Ribonucleoside-diphosphate reductase"/>
    <property type="match status" value="1"/>
</dbReference>
<dbReference type="Gene3D" id="3.20.70.20">
    <property type="match status" value="1"/>
</dbReference>
<dbReference type="InterPro" id="IPR005144">
    <property type="entry name" value="ATP-cone_dom"/>
</dbReference>
<dbReference type="InterPro" id="IPR013346">
    <property type="entry name" value="NrdE_NrdA_C"/>
</dbReference>
<dbReference type="InterPro" id="IPR000788">
    <property type="entry name" value="RNR_lg_C"/>
</dbReference>
<dbReference type="InterPro" id="IPR013509">
    <property type="entry name" value="RNR_lsu_N"/>
</dbReference>
<dbReference type="InterPro" id="IPR008926">
    <property type="entry name" value="RNR_R1-su_N"/>
</dbReference>
<dbReference type="InterPro" id="IPR039718">
    <property type="entry name" value="Rrm1"/>
</dbReference>
<dbReference type="NCBIfam" id="TIGR02506">
    <property type="entry name" value="NrdE_NrdA"/>
    <property type="match status" value="1"/>
</dbReference>
<dbReference type="PANTHER" id="PTHR11573">
    <property type="entry name" value="RIBONUCLEOSIDE-DIPHOSPHATE REDUCTASE LARGE CHAIN"/>
    <property type="match status" value="1"/>
</dbReference>
<dbReference type="PANTHER" id="PTHR11573:SF6">
    <property type="entry name" value="RIBONUCLEOSIDE-DIPHOSPHATE REDUCTASE LARGE SUBUNIT"/>
    <property type="match status" value="1"/>
</dbReference>
<dbReference type="Pfam" id="PF03477">
    <property type="entry name" value="ATP-cone"/>
    <property type="match status" value="1"/>
</dbReference>
<dbReference type="Pfam" id="PF02867">
    <property type="entry name" value="Ribonuc_red_lgC"/>
    <property type="match status" value="1"/>
</dbReference>
<dbReference type="Pfam" id="PF00317">
    <property type="entry name" value="Ribonuc_red_lgN"/>
    <property type="match status" value="1"/>
</dbReference>
<dbReference type="PRINTS" id="PR01183">
    <property type="entry name" value="RIBORDTASEM1"/>
</dbReference>
<dbReference type="SUPFAM" id="SSF51998">
    <property type="entry name" value="PFL-like glycyl radical enzymes"/>
    <property type="match status" value="1"/>
</dbReference>
<dbReference type="SUPFAM" id="SSF48168">
    <property type="entry name" value="R1 subunit of ribonucleotide reductase, N-terminal domain"/>
    <property type="match status" value="1"/>
</dbReference>
<dbReference type="PROSITE" id="PS51161">
    <property type="entry name" value="ATP_CONE"/>
    <property type="match status" value="1"/>
</dbReference>
<dbReference type="PROSITE" id="PS00089">
    <property type="entry name" value="RIBORED_LARGE"/>
    <property type="match status" value="1"/>
</dbReference>
<accession>P0DSV2</accession>
<accession>P32984</accession>
<name>RIR1_VARV</name>
<organismHost>
    <name type="scientific">Homo sapiens</name>
    <name type="common">Human</name>
    <dbReference type="NCBI Taxonomy" id="9606"/>
</organismHost>